<organism>
    <name type="scientific">Anaplasma marginale (strain Florida)</name>
    <dbReference type="NCBI Taxonomy" id="320483"/>
    <lineage>
        <taxon>Bacteria</taxon>
        <taxon>Pseudomonadati</taxon>
        <taxon>Pseudomonadota</taxon>
        <taxon>Alphaproteobacteria</taxon>
        <taxon>Rickettsiales</taxon>
        <taxon>Anaplasmataceae</taxon>
        <taxon>Anaplasma</taxon>
    </lineage>
</organism>
<name>RNC_ANAMF</name>
<protein>
    <recommendedName>
        <fullName evidence="1">Ribonuclease 3</fullName>
        <ecNumber evidence="1">3.1.26.3</ecNumber>
    </recommendedName>
    <alternativeName>
        <fullName evidence="1">Ribonuclease III</fullName>
        <shortName evidence="1">RNase III</shortName>
    </alternativeName>
</protein>
<accession>B9KGT5</accession>
<dbReference type="EC" id="3.1.26.3" evidence="1"/>
<dbReference type="EMBL" id="CP001079">
    <property type="protein sequence ID" value="ACM49639.1"/>
    <property type="molecule type" value="Genomic_DNA"/>
</dbReference>
<dbReference type="RefSeq" id="WP_010265965.1">
    <property type="nucleotide sequence ID" value="NC_012026.1"/>
</dbReference>
<dbReference type="SMR" id="B9KGT5"/>
<dbReference type="STRING" id="320483.AMF_807"/>
<dbReference type="GeneID" id="7398658"/>
<dbReference type="KEGG" id="amf:AMF_807"/>
<dbReference type="PATRIC" id="fig|320483.3.peg.932"/>
<dbReference type="eggNOG" id="COG0571">
    <property type="taxonomic scope" value="Bacteria"/>
</dbReference>
<dbReference type="HOGENOM" id="CLU_000907_1_1_5"/>
<dbReference type="Proteomes" id="UP000007307">
    <property type="component" value="Chromosome"/>
</dbReference>
<dbReference type="GO" id="GO:0005737">
    <property type="term" value="C:cytoplasm"/>
    <property type="evidence" value="ECO:0007669"/>
    <property type="project" value="UniProtKB-SubCell"/>
</dbReference>
<dbReference type="GO" id="GO:0003725">
    <property type="term" value="F:double-stranded RNA binding"/>
    <property type="evidence" value="ECO:0007669"/>
    <property type="project" value="TreeGrafter"/>
</dbReference>
<dbReference type="GO" id="GO:0046872">
    <property type="term" value="F:metal ion binding"/>
    <property type="evidence" value="ECO:0007669"/>
    <property type="project" value="UniProtKB-KW"/>
</dbReference>
<dbReference type="GO" id="GO:0004525">
    <property type="term" value="F:ribonuclease III activity"/>
    <property type="evidence" value="ECO:0007669"/>
    <property type="project" value="UniProtKB-UniRule"/>
</dbReference>
<dbReference type="GO" id="GO:0019843">
    <property type="term" value="F:rRNA binding"/>
    <property type="evidence" value="ECO:0007669"/>
    <property type="project" value="UniProtKB-KW"/>
</dbReference>
<dbReference type="GO" id="GO:0006397">
    <property type="term" value="P:mRNA processing"/>
    <property type="evidence" value="ECO:0007669"/>
    <property type="project" value="UniProtKB-UniRule"/>
</dbReference>
<dbReference type="GO" id="GO:0010468">
    <property type="term" value="P:regulation of gene expression"/>
    <property type="evidence" value="ECO:0007669"/>
    <property type="project" value="TreeGrafter"/>
</dbReference>
<dbReference type="GO" id="GO:0006364">
    <property type="term" value="P:rRNA processing"/>
    <property type="evidence" value="ECO:0007669"/>
    <property type="project" value="UniProtKB-UniRule"/>
</dbReference>
<dbReference type="GO" id="GO:0008033">
    <property type="term" value="P:tRNA processing"/>
    <property type="evidence" value="ECO:0007669"/>
    <property type="project" value="UniProtKB-KW"/>
</dbReference>
<dbReference type="CDD" id="cd10845">
    <property type="entry name" value="DSRM_RNAse_III_family"/>
    <property type="match status" value="1"/>
</dbReference>
<dbReference type="CDD" id="cd00593">
    <property type="entry name" value="RIBOc"/>
    <property type="match status" value="1"/>
</dbReference>
<dbReference type="FunFam" id="1.10.1520.10:FF:000001">
    <property type="entry name" value="Ribonuclease 3"/>
    <property type="match status" value="1"/>
</dbReference>
<dbReference type="FunFam" id="3.30.160.20:FF:000003">
    <property type="entry name" value="Ribonuclease 3"/>
    <property type="match status" value="1"/>
</dbReference>
<dbReference type="Gene3D" id="3.30.160.20">
    <property type="match status" value="1"/>
</dbReference>
<dbReference type="Gene3D" id="1.10.1520.10">
    <property type="entry name" value="Ribonuclease III domain"/>
    <property type="match status" value="1"/>
</dbReference>
<dbReference type="HAMAP" id="MF_00104">
    <property type="entry name" value="RNase_III"/>
    <property type="match status" value="1"/>
</dbReference>
<dbReference type="InterPro" id="IPR014720">
    <property type="entry name" value="dsRBD_dom"/>
</dbReference>
<dbReference type="InterPro" id="IPR011907">
    <property type="entry name" value="RNase_III"/>
</dbReference>
<dbReference type="InterPro" id="IPR000999">
    <property type="entry name" value="RNase_III_dom"/>
</dbReference>
<dbReference type="InterPro" id="IPR036389">
    <property type="entry name" value="RNase_III_sf"/>
</dbReference>
<dbReference type="NCBIfam" id="TIGR02191">
    <property type="entry name" value="RNaseIII"/>
    <property type="match status" value="1"/>
</dbReference>
<dbReference type="PANTHER" id="PTHR11207:SF0">
    <property type="entry name" value="RIBONUCLEASE 3"/>
    <property type="match status" value="1"/>
</dbReference>
<dbReference type="PANTHER" id="PTHR11207">
    <property type="entry name" value="RIBONUCLEASE III"/>
    <property type="match status" value="1"/>
</dbReference>
<dbReference type="Pfam" id="PF00035">
    <property type="entry name" value="dsrm"/>
    <property type="match status" value="1"/>
</dbReference>
<dbReference type="Pfam" id="PF14622">
    <property type="entry name" value="Ribonucleas_3_3"/>
    <property type="match status" value="1"/>
</dbReference>
<dbReference type="SMART" id="SM00358">
    <property type="entry name" value="DSRM"/>
    <property type="match status" value="1"/>
</dbReference>
<dbReference type="SMART" id="SM00535">
    <property type="entry name" value="RIBOc"/>
    <property type="match status" value="1"/>
</dbReference>
<dbReference type="SUPFAM" id="SSF54768">
    <property type="entry name" value="dsRNA-binding domain-like"/>
    <property type="match status" value="1"/>
</dbReference>
<dbReference type="SUPFAM" id="SSF69065">
    <property type="entry name" value="RNase III domain-like"/>
    <property type="match status" value="1"/>
</dbReference>
<dbReference type="PROSITE" id="PS50137">
    <property type="entry name" value="DS_RBD"/>
    <property type="match status" value="1"/>
</dbReference>
<dbReference type="PROSITE" id="PS00517">
    <property type="entry name" value="RNASE_3_1"/>
    <property type="match status" value="1"/>
</dbReference>
<dbReference type="PROSITE" id="PS50142">
    <property type="entry name" value="RNASE_3_2"/>
    <property type="match status" value="1"/>
</dbReference>
<reference key="1">
    <citation type="journal article" date="2009" name="BMC Genomics">
        <title>Conservation in the face of diversity: multistrain analysis of an intracellular bacterium.</title>
        <authorList>
            <person name="Dark M.J."/>
            <person name="Herndon D.R."/>
            <person name="Kappmeyer L.S."/>
            <person name="Gonzales M.P."/>
            <person name="Nordeen E."/>
            <person name="Palmer G.H."/>
            <person name="Knowles D.P. Jr."/>
            <person name="Brayton K.A."/>
        </authorList>
    </citation>
    <scope>NUCLEOTIDE SEQUENCE [LARGE SCALE GENOMIC DNA]</scope>
    <source>
        <strain>Florida</strain>
    </source>
</reference>
<gene>
    <name evidence="1" type="primary">rnc</name>
    <name type="ordered locus">AMF_807</name>
</gene>
<feature type="chain" id="PRO_1000118909" description="Ribonuclease 3">
    <location>
        <begin position="1"/>
        <end position="232"/>
    </location>
</feature>
<feature type="domain" description="RNase III" evidence="1">
    <location>
        <begin position="10"/>
        <end position="135"/>
    </location>
</feature>
<feature type="domain" description="DRBM" evidence="1">
    <location>
        <begin position="161"/>
        <end position="230"/>
    </location>
</feature>
<feature type="active site" evidence="1">
    <location>
        <position position="52"/>
    </location>
</feature>
<feature type="active site" evidence="1">
    <location>
        <position position="124"/>
    </location>
</feature>
<feature type="binding site" evidence="1">
    <location>
        <position position="48"/>
    </location>
    <ligand>
        <name>Mg(2+)</name>
        <dbReference type="ChEBI" id="CHEBI:18420"/>
    </ligand>
</feature>
<feature type="binding site" evidence="1">
    <location>
        <position position="121"/>
    </location>
    <ligand>
        <name>Mg(2+)</name>
        <dbReference type="ChEBI" id="CHEBI:18420"/>
    </ligand>
</feature>
<feature type="binding site" evidence="1">
    <location>
        <position position="124"/>
    </location>
    <ligand>
        <name>Mg(2+)</name>
        <dbReference type="ChEBI" id="CHEBI:18420"/>
    </ligand>
</feature>
<evidence type="ECO:0000255" key="1">
    <source>
        <dbReference type="HAMAP-Rule" id="MF_00104"/>
    </source>
</evidence>
<keyword id="KW-0963">Cytoplasm</keyword>
<keyword id="KW-0255">Endonuclease</keyword>
<keyword id="KW-0378">Hydrolase</keyword>
<keyword id="KW-0460">Magnesium</keyword>
<keyword id="KW-0479">Metal-binding</keyword>
<keyword id="KW-0507">mRNA processing</keyword>
<keyword id="KW-0540">Nuclease</keyword>
<keyword id="KW-1185">Reference proteome</keyword>
<keyword id="KW-0694">RNA-binding</keyword>
<keyword id="KW-0698">rRNA processing</keyword>
<keyword id="KW-0699">rRNA-binding</keyword>
<keyword id="KW-0819">tRNA processing</keyword>
<sequence length="232" mass="25665">MHPVDKKSLALKIYEATGYQFRDLDLLLEALTHPSLSYKSAANYERLEFLGDAVLSMTVSEMLYRLFPDDDEGCLTRKRTALVRGSEVVEIARSIGLGELILMSGGERTCGGSDNPGTLENALEALIGAMYMDGGPEAYRSFIHKHWLARAQHMSYTPPQDPKTALQEWVQGRGWAMPLYKLVSKSGPEHKPVFAVEVSIQEHGNVLGTGSSKKLAEQEAAKLMLKKITELP</sequence>
<comment type="function">
    <text evidence="1">Digests double-stranded RNA. Involved in the processing of primary rRNA transcript to yield the immediate precursors to the large and small rRNAs (23S and 16S). Processes some mRNAs, and tRNAs when they are encoded in the rRNA operon. Processes pre-crRNA and tracrRNA of type II CRISPR loci if present in the organism.</text>
</comment>
<comment type="catalytic activity">
    <reaction evidence="1">
        <text>Endonucleolytic cleavage to 5'-phosphomonoester.</text>
        <dbReference type="EC" id="3.1.26.3"/>
    </reaction>
</comment>
<comment type="cofactor">
    <cofactor evidence="1">
        <name>Mg(2+)</name>
        <dbReference type="ChEBI" id="CHEBI:18420"/>
    </cofactor>
</comment>
<comment type="subunit">
    <text evidence="1">Homodimer.</text>
</comment>
<comment type="subcellular location">
    <subcellularLocation>
        <location evidence="1">Cytoplasm</location>
    </subcellularLocation>
</comment>
<comment type="similarity">
    <text evidence="1">Belongs to the ribonuclease III family.</text>
</comment>
<proteinExistence type="inferred from homology"/>